<reference key="1">
    <citation type="journal article" date="2007" name="PLoS ONE">
        <title>Analysis of the neurotoxin complex genes in Clostridium botulinum A1-A4 and B1 strains: BoNT/A3, /Ba4 and /B1 clusters are located within plasmids.</title>
        <authorList>
            <person name="Smith T.J."/>
            <person name="Hill K.K."/>
            <person name="Foley B.T."/>
            <person name="Detter J.C."/>
            <person name="Munk A.C."/>
            <person name="Bruce D.C."/>
            <person name="Doggett N.A."/>
            <person name="Smith L.A."/>
            <person name="Marks J.D."/>
            <person name="Xie G."/>
            <person name="Brettin T.S."/>
        </authorList>
    </citation>
    <scope>NUCLEOTIDE SEQUENCE [LARGE SCALE GENOMIC DNA]</scope>
    <source>
        <strain>Okra / Type B1</strain>
    </source>
</reference>
<evidence type="ECO:0000255" key="1">
    <source>
        <dbReference type="HAMAP-Rule" id="MF_01018"/>
    </source>
</evidence>
<comment type="function">
    <text evidence="1">Catalyzes the condensation of ATP and 5-phosphoribose 1-diphosphate to form N'-(5'-phosphoribosyl)-ATP (PR-ATP). Has a crucial role in the pathway because the rate of histidine biosynthesis seems to be controlled primarily by regulation of HisG enzymatic activity.</text>
</comment>
<comment type="catalytic activity">
    <reaction evidence="1">
        <text>1-(5-phospho-beta-D-ribosyl)-ATP + diphosphate = 5-phospho-alpha-D-ribose 1-diphosphate + ATP</text>
        <dbReference type="Rhea" id="RHEA:18473"/>
        <dbReference type="ChEBI" id="CHEBI:30616"/>
        <dbReference type="ChEBI" id="CHEBI:33019"/>
        <dbReference type="ChEBI" id="CHEBI:58017"/>
        <dbReference type="ChEBI" id="CHEBI:73183"/>
        <dbReference type="EC" id="2.4.2.17"/>
    </reaction>
</comment>
<comment type="pathway">
    <text evidence="1">Amino-acid biosynthesis; L-histidine biosynthesis; L-histidine from 5-phospho-alpha-D-ribose 1-diphosphate: step 1/9.</text>
</comment>
<comment type="subunit">
    <text evidence="1">Heteromultimer composed of HisG and HisZ subunits.</text>
</comment>
<comment type="subcellular location">
    <subcellularLocation>
        <location evidence="1">Cytoplasm</location>
    </subcellularLocation>
</comment>
<comment type="domain">
    <text>Lacks the C-terminal regulatory region which is replaced by HisZ.</text>
</comment>
<comment type="similarity">
    <text evidence="1">Belongs to the ATP phosphoribosyltransferase family. Short subfamily.</text>
</comment>
<keyword id="KW-0028">Amino-acid biosynthesis</keyword>
<keyword id="KW-0067">ATP-binding</keyword>
<keyword id="KW-0963">Cytoplasm</keyword>
<keyword id="KW-0328">Glycosyltransferase</keyword>
<keyword id="KW-0368">Histidine biosynthesis</keyword>
<keyword id="KW-0547">Nucleotide-binding</keyword>
<keyword id="KW-0808">Transferase</keyword>
<proteinExistence type="inferred from homology"/>
<sequence>MKNVKIALTKGRLEKKAIEIFKTININTRELEDKGRKLIFNCENEEYNIELFLVKAKDVETYVEYGAADIGIVGKDTLMETNKEFYEVLDLNVGKCKFALAALPSFKLDQGYNMKKIATKYPNIAREYFRKKGMDVELIKIEGSVELGPIVGLADAIVDIVETGNTLRENGLVVVEDICEISARMIVNKASMKTKKDEIIKIIENVSEVIRQ</sequence>
<name>HIS1_CLOBK</name>
<gene>
    <name evidence="1" type="primary">hisG</name>
    <name type="ordered locus">CLD_2986</name>
</gene>
<accession>B1ILA4</accession>
<dbReference type="EC" id="2.4.2.17" evidence="1"/>
<dbReference type="EMBL" id="CP000939">
    <property type="protein sequence ID" value="ACA46891.1"/>
    <property type="molecule type" value="Genomic_DNA"/>
</dbReference>
<dbReference type="RefSeq" id="WP_015958176.1">
    <property type="nucleotide sequence ID" value="NC_010516.1"/>
</dbReference>
<dbReference type="SMR" id="B1ILA4"/>
<dbReference type="KEGG" id="cbb:CLD_2986"/>
<dbReference type="HOGENOM" id="CLU_038115_2_0_9"/>
<dbReference type="UniPathway" id="UPA00031">
    <property type="reaction ID" value="UER00006"/>
</dbReference>
<dbReference type="Proteomes" id="UP000008541">
    <property type="component" value="Chromosome"/>
</dbReference>
<dbReference type="GO" id="GO:0005737">
    <property type="term" value="C:cytoplasm"/>
    <property type="evidence" value="ECO:0007669"/>
    <property type="project" value="UniProtKB-SubCell"/>
</dbReference>
<dbReference type="GO" id="GO:0005524">
    <property type="term" value="F:ATP binding"/>
    <property type="evidence" value="ECO:0007669"/>
    <property type="project" value="UniProtKB-KW"/>
</dbReference>
<dbReference type="GO" id="GO:0003879">
    <property type="term" value="F:ATP phosphoribosyltransferase activity"/>
    <property type="evidence" value="ECO:0007669"/>
    <property type="project" value="UniProtKB-UniRule"/>
</dbReference>
<dbReference type="GO" id="GO:0000105">
    <property type="term" value="P:L-histidine biosynthetic process"/>
    <property type="evidence" value="ECO:0007669"/>
    <property type="project" value="UniProtKB-UniRule"/>
</dbReference>
<dbReference type="CDD" id="cd13595">
    <property type="entry name" value="PBP2_HisGs"/>
    <property type="match status" value="1"/>
</dbReference>
<dbReference type="FunFam" id="3.40.190.10:FF:000008">
    <property type="entry name" value="ATP phosphoribosyltransferase"/>
    <property type="match status" value="1"/>
</dbReference>
<dbReference type="FunFam" id="3.40.190.10:FF:000011">
    <property type="entry name" value="ATP phosphoribosyltransferase"/>
    <property type="match status" value="1"/>
</dbReference>
<dbReference type="Gene3D" id="3.40.190.10">
    <property type="entry name" value="Periplasmic binding protein-like II"/>
    <property type="match status" value="2"/>
</dbReference>
<dbReference type="HAMAP" id="MF_01018">
    <property type="entry name" value="HisG_Short"/>
    <property type="match status" value="1"/>
</dbReference>
<dbReference type="InterPro" id="IPR013820">
    <property type="entry name" value="ATP_PRibTrfase_cat"/>
</dbReference>
<dbReference type="InterPro" id="IPR018198">
    <property type="entry name" value="ATP_PRibTrfase_CS"/>
</dbReference>
<dbReference type="InterPro" id="IPR001348">
    <property type="entry name" value="ATP_PRibTrfase_HisG"/>
</dbReference>
<dbReference type="InterPro" id="IPR024893">
    <property type="entry name" value="ATP_PRibTrfase_HisG_short"/>
</dbReference>
<dbReference type="NCBIfam" id="TIGR00070">
    <property type="entry name" value="hisG"/>
    <property type="match status" value="1"/>
</dbReference>
<dbReference type="PANTHER" id="PTHR21403:SF8">
    <property type="entry name" value="ATP PHOSPHORIBOSYLTRANSFERASE"/>
    <property type="match status" value="1"/>
</dbReference>
<dbReference type="PANTHER" id="PTHR21403">
    <property type="entry name" value="ATP PHOSPHORIBOSYLTRANSFERASE ATP-PRTASE"/>
    <property type="match status" value="1"/>
</dbReference>
<dbReference type="Pfam" id="PF01634">
    <property type="entry name" value="HisG"/>
    <property type="match status" value="1"/>
</dbReference>
<dbReference type="SUPFAM" id="SSF53850">
    <property type="entry name" value="Periplasmic binding protein-like II"/>
    <property type="match status" value="1"/>
</dbReference>
<dbReference type="PROSITE" id="PS01316">
    <property type="entry name" value="ATP_P_PHORIBOSYLTR"/>
    <property type="match status" value="1"/>
</dbReference>
<feature type="chain" id="PRO_1000135275" description="ATP phosphoribosyltransferase">
    <location>
        <begin position="1"/>
        <end position="212"/>
    </location>
</feature>
<organism>
    <name type="scientific">Clostridium botulinum (strain Okra / Type B1)</name>
    <dbReference type="NCBI Taxonomy" id="498213"/>
    <lineage>
        <taxon>Bacteria</taxon>
        <taxon>Bacillati</taxon>
        <taxon>Bacillota</taxon>
        <taxon>Clostridia</taxon>
        <taxon>Eubacteriales</taxon>
        <taxon>Clostridiaceae</taxon>
        <taxon>Clostridium</taxon>
    </lineage>
</organism>
<protein>
    <recommendedName>
        <fullName evidence="1">ATP phosphoribosyltransferase</fullName>
        <shortName evidence="1">ATP-PRT</shortName>
        <shortName evidence="1">ATP-PRTase</shortName>
        <ecNumber evidence="1">2.4.2.17</ecNumber>
    </recommendedName>
</protein>